<comment type="catalytic activity">
    <reaction evidence="1">
        <text>uridine + ATP = UMP + ADP + H(+)</text>
        <dbReference type="Rhea" id="RHEA:16825"/>
        <dbReference type="ChEBI" id="CHEBI:15378"/>
        <dbReference type="ChEBI" id="CHEBI:16704"/>
        <dbReference type="ChEBI" id="CHEBI:30616"/>
        <dbReference type="ChEBI" id="CHEBI:57865"/>
        <dbReference type="ChEBI" id="CHEBI:456216"/>
        <dbReference type="EC" id="2.7.1.48"/>
    </reaction>
</comment>
<comment type="catalytic activity">
    <reaction evidence="1">
        <text>cytidine + ATP = CMP + ADP + H(+)</text>
        <dbReference type="Rhea" id="RHEA:24674"/>
        <dbReference type="ChEBI" id="CHEBI:15378"/>
        <dbReference type="ChEBI" id="CHEBI:17562"/>
        <dbReference type="ChEBI" id="CHEBI:30616"/>
        <dbReference type="ChEBI" id="CHEBI:60377"/>
        <dbReference type="ChEBI" id="CHEBI:456216"/>
        <dbReference type="EC" id="2.7.1.48"/>
    </reaction>
</comment>
<comment type="pathway">
    <text evidence="1">Pyrimidine metabolism; CTP biosynthesis via salvage pathway; CTP from cytidine: step 1/3.</text>
</comment>
<comment type="pathway">
    <text evidence="1">Pyrimidine metabolism; UMP biosynthesis via salvage pathway; UMP from uridine: step 1/1.</text>
</comment>
<comment type="subcellular location">
    <subcellularLocation>
        <location evidence="1">Cytoplasm</location>
    </subcellularLocation>
</comment>
<comment type="similarity">
    <text evidence="1">Belongs to the uridine kinase family.</text>
</comment>
<accession>C4LEX3</accession>
<protein>
    <recommendedName>
        <fullName evidence="1">Uridine kinase</fullName>
        <ecNumber evidence="1">2.7.1.48</ecNumber>
    </recommendedName>
    <alternativeName>
        <fullName evidence="1">Cytidine monophosphokinase</fullName>
    </alternativeName>
    <alternativeName>
        <fullName evidence="1">Uridine monophosphokinase</fullName>
    </alternativeName>
</protein>
<feature type="chain" id="PRO_1000212003" description="Uridine kinase">
    <location>
        <begin position="1"/>
        <end position="214"/>
    </location>
</feature>
<feature type="binding site" evidence="1">
    <location>
        <begin position="15"/>
        <end position="22"/>
    </location>
    <ligand>
        <name>ATP</name>
        <dbReference type="ChEBI" id="CHEBI:30616"/>
    </ligand>
</feature>
<dbReference type="EC" id="2.7.1.48" evidence="1"/>
<dbReference type="EMBL" id="CP001616">
    <property type="protein sequence ID" value="ACQ93140.1"/>
    <property type="molecule type" value="Genomic_DNA"/>
</dbReference>
<dbReference type="RefSeq" id="WP_015878612.1">
    <property type="nucleotide sequence ID" value="NC_012691.1"/>
</dbReference>
<dbReference type="SMR" id="C4LEX3"/>
<dbReference type="STRING" id="595494.Tola_1529"/>
<dbReference type="KEGG" id="tau:Tola_1529"/>
<dbReference type="eggNOG" id="COG0572">
    <property type="taxonomic scope" value="Bacteria"/>
</dbReference>
<dbReference type="HOGENOM" id="CLU_021278_1_2_6"/>
<dbReference type="OrthoDB" id="9777642at2"/>
<dbReference type="UniPathway" id="UPA00574">
    <property type="reaction ID" value="UER00637"/>
</dbReference>
<dbReference type="UniPathway" id="UPA00579">
    <property type="reaction ID" value="UER00640"/>
</dbReference>
<dbReference type="Proteomes" id="UP000009073">
    <property type="component" value="Chromosome"/>
</dbReference>
<dbReference type="GO" id="GO:0005737">
    <property type="term" value="C:cytoplasm"/>
    <property type="evidence" value="ECO:0007669"/>
    <property type="project" value="UniProtKB-SubCell"/>
</dbReference>
<dbReference type="GO" id="GO:0005524">
    <property type="term" value="F:ATP binding"/>
    <property type="evidence" value="ECO:0007669"/>
    <property type="project" value="UniProtKB-UniRule"/>
</dbReference>
<dbReference type="GO" id="GO:0043771">
    <property type="term" value="F:cytidine kinase activity"/>
    <property type="evidence" value="ECO:0007669"/>
    <property type="project" value="RHEA"/>
</dbReference>
<dbReference type="GO" id="GO:0004849">
    <property type="term" value="F:uridine kinase activity"/>
    <property type="evidence" value="ECO:0007669"/>
    <property type="project" value="UniProtKB-UniRule"/>
</dbReference>
<dbReference type="GO" id="GO:0044211">
    <property type="term" value="P:CTP salvage"/>
    <property type="evidence" value="ECO:0007669"/>
    <property type="project" value="UniProtKB-UniRule"/>
</dbReference>
<dbReference type="GO" id="GO:0044206">
    <property type="term" value="P:UMP salvage"/>
    <property type="evidence" value="ECO:0007669"/>
    <property type="project" value="UniProtKB-UniRule"/>
</dbReference>
<dbReference type="CDD" id="cd02023">
    <property type="entry name" value="UMPK"/>
    <property type="match status" value="1"/>
</dbReference>
<dbReference type="Gene3D" id="3.40.50.300">
    <property type="entry name" value="P-loop containing nucleotide triphosphate hydrolases"/>
    <property type="match status" value="1"/>
</dbReference>
<dbReference type="HAMAP" id="MF_00551">
    <property type="entry name" value="Uridine_kinase"/>
    <property type="match status" value="1"/>
</dbReference>
<dbReference type="InterPro" id="IPR027417">
    <property type="entry name" value="P-loop_NTPase"/>
</dbReference>
<dbReference type="InterPro" id="IPR006083">
    <property type="entry name" value="PRK/URK"/>
</dbReference>
<dbReference type="InterPro" id="IPR026008">
    <property type="entry name" value="Uridine_kinase"/>
</dbReference>
<dbReference type="InterPro" id="IPR000764">
    <property type="entry name" value="Uridine_kinase-like"/>
</dbReference>
<dbReference type="NCBIfam" id="NF004018">
    <property type="entry name" value="PRK05480.1"/>
    <property type="match status" value="1"/>
</dbReference>
<dbReference type="NCBIfam" id="TIGR00235">
    <property type="entry name" value="udk"/>
    <property type="match status" value="1"/>
</dbReference>
<dbReference type="PANTHER" id="PTHR10285">
    <property type="entry name" value="URIDINE KINASE"/>
    <property type="match status" value="1"/>
</dbReference>
<dbReference type="Pfam" id="PF00485">
    <property type="entry name" value="PRK"/>
    <property type="match status" value="1"/>
</dbReference>
<dbReference type="PRINTS" id="PR00988">
    <property type="entry name" value="URIDINKINASE"/>
</dbReference>
<dbReference type="SUPFAM" id="SSF52540">
    <property type="entry name" value="P-loop containing nucleoside triphosphate hydrolases"/>
    <property type="match status" value="1"/>
</dbReference>
<organism>
    <name type="scientific">Tolumonas auensis (strain DSM 9187 / NBRC 110442 / TA 4)</name>
    <dbReference type="NCBI Taxonomy" id="595494"/>
    <lineage>
        <taxon>Bacteria</taxon>
        <taxon>Pseudomonadati</taxon>
        <taxon>Pseudomonadota</taxon>
        <taxon>Gammaproteobacteria</taxon>
        <taxon>Aeromonadales</taxon>
        <taxon>Aeromonadaceae</taxon>
        <taxon>Tolumonas</taxon>
    </lineage>
</organism>
<evidence type="ECO:0000255" key="1">
    <source>
        <dbReference type="HAMAP-Rule" id="MF_00551"/>
    </source>
</evidence>
<reference key="1">
    <citation type="submission" date="2009-05" db="EMBL/GenBank/DDBJ databases">
        <title>Complete sequence of Tolumonas auensis DSM 9187.</title>
        <authorList>
            <consortium name="US DOE Joint Genome Institute"/>
            <person name="Lucas S."/>
            <person name="Copeland A."/>
            <person name="Lapidus A."/>
            <person name="Glavina del Rio T."/>
            <person name="Tice H."/>
            <person name="Bruce D."/>
            <person name="Goodwin L."/>
            <person name="Pitluck S."/>
            <person name="Chertkov O."/>
            <person name="Brettin T."/>
            <person name="Detter J.C."/>
            <person name="Han C."/>
            <person name="Larimer F."/>
            <person name="Land M."/>
            <person name="Hauser L."/>
            <person name="Kyrpides N."/>
            <person name="Mikhailova N."/>
            <person name="Spring S."/>
            <person name="Beller H."/>
        </authorList>
    </citation>
    <scope>NUCLEOTIDE SEQUENCE [LARGE SCALE GENOMIC DNA]</scope>
    <source>
        <strain>DSM 9187 / NBRC 110442 / TA 4</strain>
    </source>
</reference>
<gene>
    <name evidence="1" type="primary">udk</name>
    <name type="ordered locus">Tola_1529</name>
</gene>
<sequence>MSDTNPDCVIIGIAGASASGKSLIARTIYNELTAELGEDQIGVITEDCYYKDQSHLPMAERIKTNYDHPAAFDHALLAEHLKQLMAGKAVDIPTYSYSEHTRTDQTIRFTPKRIIILEGILLLNDSALRKLLNVSIFMDTPLDICLVRRLARDVQERGRTMDSVLEQYQKTVRPMFLQFIEPSKQYADIIIPRGGRNRIAIEMLKSRIRHLLLS</sequence>
<proteinExistence type="inferred from homology"/>
<name>URK_TOLAT</name>
<keyword id="KW-0067">ATP-binding</keyword>
<keyword id="KW-0963">Cytoplasm</keyword>
<keyword id="KW-0418">Kinase</keyword>
<keyword id="KW-0547">Nucleotide-binding</keyword>
<keyword id="KW-1185">Reference proteome</keyword>
<keyword id="KW-0808">Transferase</keyword>